<dbReference type="EC" id="3.2.1.15"/>
<dbReference type="EMBL" id="AF085238">
    <property type="protein sequence ID" value="AAC83692.1"/>
    <property type="molecule type" value="Genomic_DNA"/>
</dbReference>
<dbReference type="SMR" id="O93883"/>
<dbReference type="CAZy" id="GH28">
    <property type="family name" value="Glycoside Hydrolase Family 28"/>
</dbReference>
<dbReference type="GO" id="GO:0005576">
    <property type="term" value="C:extracellular region"/>
    <property type="evidence" value="ECO:0007669"/>
    <property type="project" value="UniProtKB-SubCell"/>
</dbReference>
<dbReference type="GO" id="GO:0004650">
    <property type="term" value="F:polygalacturonase activity"/>
    <property type="evidence" value="ECO:0007669"/>
    <property type="project" value="UniProtKB-EC"/>
</dbReference>
<dbReference type="GO" id="GO:0071555">
    <property type="term" value="P:cell wall organization"/>
    <property type="evidence" value="ECO:0007669"/>
    <property type="project" value="UniProtKB-KW"/>
</dbReference>
<dbReference type="GO" id="GO:0045490">
    <property type="term" value="P:pectin catabolic process"/>
    <property type="evidence" value="ECO:0007669"/>
    <property type="project" value="TreeGrafter"/>
</dbReference>
<dbReference type="FunFam" id="2.160.20.10:FF:000002">
    <property type="entry name" value="Endopolygalacturonase D"/>
    <property type="match status" value="1"/>
</dbReference>
<dbReference type="Gene3D" id="2.160.20.10">
    <property type="entry name" value="Single-stranded right-handed beta-helix, Pectin lyase-like"/>
    <property type="match status" value="1"/>
</dbReference>
<dbReference type="InterPro" id="IPR000743">
    <property type="entry name" value="Glyco_hydro_28"/>
</dbReference>
<dbReference type="InterPro" id="IPR050434">
    <property type="entry name" value="Glycosyl_hydrlase_28"/>
</dbReference>
<dbReference type="InterPro" id="IPR006626">
    <property type="entry name" value="PbH1"/>
</dbReference>
<dbReference type="InterPro" id="IPR012334">
    <property type="entry name" value="Pectin_lyas_fold"/>
</dbReference>
<dbReference type="InterPro" id="IPR011050">
    <property type="entry name" value="Pectin_lyase_fold/virulence"/>
</dbReference>
<dbReference type="PANTHER" id="PTHR31884">
    <property type="entry name" value="POLYGALACTURONASE"/>
    <property type="match status" value="1"/>
</dbReference>
<dbReference type="PANTHER" id="PTHR31884:SF1">
    <property type="entry name" value="POLYGALACTURONASE"/>
    <property type="match status" value="1"/>
</dbReference>
<dbReference type="Pfam" id="PF00295">
    <property type="entry name" value="Glyco_hydro_28"/>
    <property type="match status" value="1"/>
</dbReference>
<dbReference type="SMART" id="SM00710">
    <property type="entry name" value="PbH1"/>
    <property type="match status" value="5"/>
</dbReference>
<dbReference type="SUPFAM" id="SSF51126">
    <property type="entry name" value="Pectin lyase-like"/>
    <property type="match status" value="1"/>
</dbReference>
<dbReference type="PROSITE" id="PS00502">
    <property type="entry name" value="POLYGALACTURONASE"/>
    <property type="match status" value="1"/>
</dbReference>
<comment type="catalytic activity">
    <reaction>
        <text>(1,4-alpha-D-galacturonosyl)n+m + H2O = (1,4-alpha-D-galacturonosyl)n + (1,4-alpha-D-galacturonosyl)m.</text>
        <dbReference type="EC" id="3.2.1.15"/>
    </reaction>
</comment>
<comment type="subcellular location">
    <subcellularLocation>
        <location evidence="4">Secreted</location>
    </subcellularLocation>
</comment>
<comment type="similarity">
    <text evidence="4">Belongs to the glycosyl hydrolase 28 family.</text>
</comment>
<name>PGLR_PENGR</name>
<evidence type="ECO:0000250" key="1">
    <source>
        <dbReference type="UniProtKB" id="O74213"/>
    </source>
</evidence>
<evidence type="ECO:0000255" key="2"/>
<evidence type="ECO:0000255" key="3">
    <source>
        <dbReference type="PROSITE-ProRule" id="PRU10052"/>
    </source>
</evidence>
<evidence type="ECO:0000305" key="4"/>
<sequence length="376" mass="38068">MASSLKLGLIALLGATAVNAAPAAEPVLGTSLLTSRASCTFSGSSGAAEAIKSKTSCSTITLSNVEVPAGTTLDLTGLKSGTTVIFEGTTTFGYKEWEGPLVSVSGTSITVQGASGAQLNGDGARWWDGKGTNGGKTKPKFFYAHSLTNSKIENIYIKNSPVQVFSINGAKELTLSGITVDTADGDSNGGHNTDAFDVGSSNGVYITSPIVHNQDDCLAVNSGTNVHFTGAQCTGGHGISIGSVGGRSDNTVDGVTVESCTIKDSDNGVRIKTVYGATGTVQGVTYKDITLSGIAKYGIVIEQDYENGSPTGTPTSGVPITDLTLDNVHGTVASSGVDTYILCASGACSDWSWSGVSITGGQTSKKCKGIPSGASC</sequence>
<keyword id="KW-0961">Cell wall biogenesis/degradation</keyword>
<keyword id="KW-1015">Disulfide bond</keyword>
<keyword id="KW-0326">Glycosidase</keyword>
<keyword id="KW-0378">Hydrolase</keyword>
<keyword id="KW-0677">Repeat</keyword>
<keyword id="KW-0964">Secreted</keyword>
<keyword id="KW-0732">Signal</keyword>
<organism>
    <name type="scientific">Penicillium griseoroseum</name>
    <dbReference type="NCBI Taxonomy" id="84562"/>
    <lineage>
        <taxon>Eukaryota</taxon>
        <taxon>Fungi</taxon>
        <taxon>Dikarya</taxon>
        <taxon>Ascomycota</taxon>
        <taxon>Pezizomycotina</taxon>
        <taxon>Eurotiomycetes</taxon>
        <taxon>Eurotiomycetidae</taxon>
        <taxon>Eurotiales</taxon>
        <taxon>Aspergillaceae</taxon>
        <taxon>Penicillium</taxon>
    </lineage>
</organism>
<proteinExistence type="inferred from homology"/>
<protein>
    <recommendedName>
        <fullName>Polygalacturonase</fullName>
        <shortName>PG</shortName>
        <ecNumber>3.2.1.15</ecNumber>
    </recommendedName>
    <alternativeName>
        <fullName>Pectinase</fullName>
    </alternativeName>
</protein>
<reference key="1">
    <citation type="submission" date="1998-08" db="EMBL/GenBank/DDBJ databases">
        <title>Cloning and characterization of a gene encoding the endopolygalacturonase of Penicillium griseoroseum.</title>
        <authorList>
            <person name="Ribon A.B."/>
            <person name="Coelho J.L.C."/>
            <person name="Barros E.G."/>
            <person name="Araujo E.F."/>
        </authorList>
    </citation>
    <scope>NUCLEOTIDE SEQUENCE [GENOMIC DNA]</scope>
    <source>
        <strain>CCT 6421</strain>
    </source>
</reference>
<accession>O93883</accession>
<gene>
    <name type="primary">PGG1</name>
</gene>
<feature type="signal peptide" evidence="2">
    <location>
        <begin position="1"/>
        <end position="20"/>
    </location>
</feature>
<feature type="chain" id="PRO_0000024789" description="Polygalacturonase">
    <location>
        <begin position="21"/>
        <end position="376"/>
    </location>
</feature>
<feature type="repeat" description="PbH1 1" evidence="2">
    <location>
        <begin position="170"/>
        <end position="208"/>
    </location>
</feature>
<feature type="repeat" description="PbH1 2" evidence="2">
    <location>
        <begin position="223"/>
        <end position="243"/>
    </location>
</feature>
<feature type="repeat" description="PbH1 3" evidence="2">
    <location>
        <begin position="252"/>
        <end position="273"/>
    </location>
</feature>
<feature type="repeat" description="PbH1 4" evidence="2">
    <location>
        <begin position="281"/>
        <end position="303"/>
    </location>
</feature>
<feature type="repeat" description="PbH1 5" evidence="2">
    <location>
        <begin position="315"/>
        <end position="360"/>
    </location>
</feature>
<feature type="active site" description="Proton donor" evidence="1">
    <location>
        <position position="215"/>
    </location>
</feature>
<feature type="active site" evidence="3">
    <location>
        <position position="237"/>
    </location>
</feature>
<feature type="disulfide bond" evidence="1">
    <location>
        <begin position="39"/>
        <end position="57"/>
    </location>
</feature>
<feature type="disulfide bond" evidence="1">
    <location>
        <begin position="217"/>
        <end position="233"/>
    </location>
</feature>
<feature type="disulfide bond" evidence="1">
    <location>
        <begin position="343"/>
        <end position="348"/>
    </location>
</feature>
<feature type="disulfide bond" evidence="1">
    <location>
        <begin position="367"/>
        <end position="376"/>
    </location>
</feature>